<protein>
    <recommendedName>
        <fullName evidence="1">Crossover junction endodeoxyribonuclease RuvC</fullName>
        <ecNumber evidence="1">3.1.21.10</ecNumber>
    </recommendedName>
    <alternativeName>
        <fullName evidence="1">Holliday junction nuclease RuvC</fullName>
    </alternativeName>
    <alternativeName>
        <fullName evidence="1">Holliday junction resolvase RuvC</fullName>
    </alternativeName>
</protein>
<comment type="function">
    <text evidence="1">The RuvA-RuvB-RuvC complex processes Holliday junction (HJ) DNA during genetic recombination and DNA repair. Endonuclease that resolves HJ intermediates. Cleaves cruciform DNA by making single-stranded nicks across the HJ at symmetrical positions within the homologous arms, yielding a 5'-phosphate and a 3'-hydroxyl group; requires a central core of homology in the junction. The consensus cleavage sequence is 5'-(A/T)TT(C/G)-3'. Cleavage occurs on the 3'-side of the TT dinucleotide at the point of strand exchange. HJ branch migration catalyzed by RuvA-RuvB allows RuvC to scan DNA until it finds its consensus sequence, where it cleaves and resolves the cruciform DNA.</text>
</comment>
<comment type="catalytic activity">
    <reaction evidence="1">
        <text>Endonucleolytic cleavage at a junction such as a reciprocal single-stranded crossover between two homologous DNA duplexes (Holliday junction).</text>
        <dbReference type="EC" id="3.1.21.10"/>
    </reaction>
</comment>
<comment type="cofactor">
    <cofactor evidence="1">
        <name>Mg(2+)</name>
        <dbReference type="ChEBI" id="CHEBI:18420"/>
    </cofactor>
    <text evidence="1">Binds 2 Mg(2+) ion per subunit.</text>
</comment>
<comment type="subunit">
    <text evidence="1">Homodimer which binds Holliday junction (HJ) DNA. The HJ becomes 2-fold symmetrical on binding to RuvC with unstacked arms; it has a different conformation from HJ DNA in complex with RuvA. In the full resolvosome a probable DNA-RuvA(4)-RuvB(12)-RuvC(2) complex forms which resolves the HJ.</text>
</comment>
<comment type="subcellular location">
    <subcellularLocation>
        <location evidence="1">Cytoplasm</location>
    </subcellularLocation>
</comment>
<comment type="similarity">
    <text evidence="1">Belongs to the RuvC family.</text>
</comment>
<accession>Q183P3</accession>
<name>RUVC_CLOD6</name>
<organism>
    <name type="scientific">Clostridioides difficile (strain 630)</name>
    <name type="common">Peptoclostridium difficile</name>
    <dbReference type="NCBI Taxonomy" id="272563"/>
    <lineage>
        <taxon>Bacteria</taxon>
        <taxon>Bacillati</taxon>
        <taxon>Bacillota</taxon>
        <taxon>Clostridia</taxon>
        <taxon>Peptostreptococcales</taxon>
        <taxon>Peptostreptococcaceae</taxon>
        <taxon>Clostridioides</taxon>
    </lineage>
</organism>
<reference key="1">
    <citation type="journal article" date="2006" name="Nat. Genet.">
        <title>The multidrug-resistant human pathogen Clostridium difficile has a highly mobile, mosaic genome.</title>
        <authorList>
            <person name="Sebaihia M."/>
            <person name="Wren B.W."/>
            <person name="Mullany P."/>
            <person name="Fairweather N.F."/>
            <person name="Minton N."/>
            <person name="Stabler R."/>
            <person name="Thomson N.R."/>
            <person name="Roberts A.P."/>
            <person name="Cerdeno-Tarraga A.M."/>
            <person name="Wang H."/>
            <person name="Holden M.T.G."/>
            <person name="Wright A."/>
            <person name="Churcher C."/>
            <person name="Quail M.A."/>
            <person name="Baker S."/>
            <person name="Bason N."/>
            <person name="Brooks K."/>
            <person name="Chillingworth T."/>
            <person name="Cronin A."/>
            <person name="Davis P."/>
            <person name="Dowd L."/>
            <person name="Fraser A."/>
            <person name="Feltwell T."/>
            <person name="Hance Z."/>
            <person name="Holroyd S."/>
            <person name="Jagels K."/>
            <person name="Moule S."/>
            <person name="Mungall K."/>
            <person name="Price C."/>
            <person name="Rabbinowitsch E."/>
            <person name="Sharp S."/>
            <person name="Simmonds M."/>
            <person name="Stevens K."/>
            <person name="Unwin L."/>
            <person name="Whithead S."/>
            <person name="Dupuy B."/>
            <person name="Dougan G."/>
            <person name="Barrell B."/>
            <person name="Parkhill J."/>
        </authorList>
    </citation>
    <scope>NUCLEOTIDE SEQUENCE [LARGE SCALE GENOMIC DNA]</scope>
    <source>
        <strain>630</strain>
    </source>
</reference>
<gene>
    <name evidence="1" type="primary">ruvC</name>
    <name type="ordered locus">CD630_28070</name>
</gene>
<evidence type="ECO:0000255" key="1">
    <source>
        <dbReference type="HAMAP-Rule" id="MF_00034"/>
    </source>
</evidence>
<feature type="chain" id="PRO_1000002745" description="Crossover junction endodeoxyribonuclease RuvC">
    <location>
        <begin position="1"/>
        <end position="169"/>
    </location>
</feature>
<feature type="active site" evidence="1">
    <location>
        <position position="7"/>
    </location>
</feature>
<feature type="active site" evidence="1">
    <location>
        <position position="67"/>
    </location>
</feature>
<feature type="active site" evidence="1">
    <location>
        <position position="140"/>
    </location>
</feature>
<feature type="binding site" evidence="1">
    <location>
        <position position="7"/>
    </location>
    <ligand>
        <name>Mg(2+)</name>
        <dbReference type="ChEBI" id="CHEBI:18420"/>
        <label>1</label>
    </ligand>
</feature>
<feature type="binding site" evidence="1">
    <location>
        <position position="67"/>
    </location>
    <ligand>
        <name>Mg(2+)</name>
        <dbReference type="ChEBI" id="CHEBI:18420"/>
        <label>2</label>
    </ligand>
</feature>
<feature type="binding site" evidence="1">
    <location>
        <position position="140"/>
    </location>
    <ligand>
        <name>Mg(2+)</name>
        <dbReference type="ChEBI" id="CHEBI:18420"/>
        <label>1</label>
    </ligand>
</feature>
<keyword id="KW-0963">Cytoplasm</keyword>
<keyword id="KW-0227">DNA damage</keyword>
<keyword id="KW-0233">DNA recombination</keyword>
<keyword id="KW-0234">DNA repair</keyword>
<keyword id="KW-0238">DNA-binding</keyword>
<keyword id="KW-0255">Endonuclease</keyword>
<keyword id="KW-0378">Hydrolase</keyword>
<keyword id="KW-0460">Magnesium</keyword>
<keyword id="KW-0479">Metal-binding</keyword>
<keyword id="KW-0540">Nuclease</keyword>
<keyword id="KW-1185">Reference proteome</keyword>
<proteinExistence type="inferred from homology"/>
<sequence>MIILGIDPGIAIVGYGIIEYKNSKFKAIDYGAVTTPAHMNISRRLELVYKGIDTIVKNYNIDEVGMEELFFNKNVKTAITVAQARGVTMLACAHNGKPVYEYTPLQVKQGVVGYGRADKAQVQQMVTSFLSLKKVPKPDDVADALAVAICHAHSNKLEKTLKNIGGKYV</sequence>
<dbReference type="EC" id="3.1.21.10" evidence="1"/>
<dbReference type="EMBL" id="AM180355">
    <property type="protein sequence ID" value="CAJ69695.1"/>
    <property type="molecule type" value="Genomic_DNA"/>
</dbReference>
<dbReference type="RefSeq" id="WP_011861695.1">
    <property type="nucleotide sequence ID" value="NZ_JAUPES010000033.1"/>
</dbReference>
<dbReference type="RefSeq" id="YP_001089320.1">
    <property type="nucleotide sequence ID" value="NC_009089.1"/>
</dbReference>
<dbReference type="SMR" id="Q183P3"/>
<dbReference type="STRING" id="272563.CD630_28070"/>
<dbReference type="EnsemblBacteria" id="CAJ69695">
    <property type="protein sequence ID" value="CAJ69695"/>
    <property type="gene ID" value="CD630_28070"/>
</dbReference>
<dbReference type="GeneID" id="66355215"/>
<dbReference type="KEGG" id="cdf:CD630_28070"/>
<dbReference type="KEGG" id="pdc:CDIF630_03072"/>
<dbReference type="PATRIC" id="fig|272563.120.peg.2957"/>
<dbReference type="eggNOG" id="COG0817">
    <property type="taxonomic scope" value="Bacteria"/>
</dbReference>
<dbReference type="OrthoDB" id="9805499at2"/>
<dbReference type="PhylomeDB" id="Q183P3"/>
<dbReference type="BioCyc" id="PDIF272563:G12WB-2967-MONOMER"/>
<dbReference type="Proteomes" id="UP000001978">
    <property type="component" value="Chromosome"/>
</dbReference>
<dbReference type="GO" id="GO:0005737">
    <property type="term" value="C:cytoplasm"/>
    <property type="evidence" value="ECO:0007669"/>
    <property type="project" value="UniProtKB-SubCell"/>
</dbReference>
<dbReference type="GO" id="GO:0048476">
    <property type="term" value="C:Holliday junction resolvase complex"/>
    <property type="evidence" value="ECO:0007669"/>
    <property type="project" value="UniProtKB-UniRule"/>
</dbReference>
<dbReference type="GO" id="GO:0008821">
    <property type="term" value="F:crossover junction DNA endonuclease activity"/>
    <property type="evidence" value="ECO:0007669"/>
    <property type="project" value="UniProtKB-UniRule"/>
</dbReference>
<dbReference type="GO" id="GO:0003677">
    <property type="term" value="F:DNA binding"/>
    <property type="evidence" value="ECO:0007669"/>
    <property type="project" value="UniProtKB-KW"/>
</dbReference>
<dbReference type="GO" id="GO:0000287">
    <property type="term" value="F:magnesium ion binding"/>
    <property type="evidence" value="ECO:0007669"/>
    <property type="project" value="UniProtKB-UniRule"/>
</dbReference>
<dbReference type="GO" id="GO:0006310">
    <property type="term" value="P:DNA recombination"/>
    <property type="evidence" value="ECO:0007669"/>
    <property type="project" value="UniProtKB-UniRule"/>
</dbReference>
<dbReference type="GO" id="GO:0006281">
    <property type="term" value="P:DNA repair"/>
    <property type="evidence" value="ECO:0007669"/>
    <property type="project" value="UniProtKB-UniRule"/>
</dbReference>
<dbReference type="CDD" id="cd16962">
    <property type="entry name" value="RuvC"/>
    <property type="match status" value="1"/>
</dbReference>
<dbReference type="FunFam" id="3.30.420.10:FF:000002">
    <property type="entry name" value="Crossover junction endodeoxyribonuclease RuvC"/>
    <property type="match status" value="1"/>
</dbReference>
<dbReference type="Gene3D" id="3.30.420.10">
    <property type="entry name" value="Ribonuclease H-like superfamily/Ribonuclease H"/>
    <property type="match status" value="1"/>
</dbReference>
<dbReference type="HAMAP" id="MF_00034">
    <property type="entry name" value="RuvC"/>
    <property type="match status" value="1"/>
</dbReference>
<dbReference type="InterPro" id="IPR012337">
    <property type="entry name" value="RNaseH-like_sf"/>
</dbReference>
<dbReference type="InterPro" id="IPR036397">
    <property type="entry name" value="RNaseH_sf"/>
</dbReference>
<dbReference type="InterPro" id="IPR020563">
    <property type="entry name" value="X-over_junc_endoDNase_Mg_BS"/>
</dbReference>
<dbReference type="InterPro" id="IPR002176">
    <property type="entry name" value="X-over_junc_endoDNase_RuvC"/>
</dbReference>
<dbReference type="NCBIfam" id="NF000711">
    <property type="entry name" value="PRK00039.2-1"/>
    <property type="match status" value="1"/>
</dbReference>
<dbReference type="NCBIfam" id="TIGR00228">
    <property type="entry name" value="ruvC"/>
    <property type="match status" value="1"/>
</dbReference>
<dbReference type="PANTHER" id="PTHR30194">
    <property type="entry name" value="CROSSOVER JUNCTION ENDODEOXYRIBONUCLEASE RUVC"/>
    <property type="match status" value="1"/>
</dbReference>
<dbReference type="PANTHER" id="PTHR30194:SF3">
    <property type="entry name" value="CROSSOVER JUNCTION ENDODEOXYRIBONUCLEASE RUVC"/>
    <property type="match status" value="1"/>
</dbReference>
<dbReference type="Pfam" id="PF02075">
    <property type="entry name" value="RuvC"/>
    <property type="match status" value="1"/>
</dbReference>
<dbReference type="PRINTS" id="PR00696">
    <property type="entry name" value="RSOLVASERUVC"/>
</dbReference>
<dbReference type="SUPFAM" id="SSF53098">
    <property type="entry name" value="Ribonuclease H-like"/>
    <property type="match status" value="1"/>
</dbReference>
<dbReference type="PROSITE" id="PS01321">
    <property type="entry name" value="RUVC"/>
    <property type="match status" value="1"/>
</dbReference>